<name>RLME_RICAE</name>
<keyword id="KW-0963">Cytoplasm</keyword>
<keyword id="KW-0489">Methyltransferase</keyword>
<keyword id="KW-0698">rRNA processing</keyword>
<keyword id="KW-0949">S-adenosyl-L-methionine</keyword>
<keyword id="KW-0808">Transferase</keyword>
<dbReference type="EC" id="2.1.1.166" evidence="1"/>
<dbReference type="EMBL" id="CP001612">
    <property type="protein sequence ID" value="ACP53163.1"/>
    <property type="molecule type" value="Genomic_DNA"/>
</dbReference>
<dbReference type="RefSeq" id="WP_012719430.1">
    <property type="nucleotide sequence ID" value="NC_012633.1"/>
</dbReference>
<dbReference type="SMR" id="C3PMK3"/>
<dbReference type="KEGG" id="raf:RAF_ORF0196"/>
<dbReference type="HOGENOM" id="CLU_009422_4_0_5"/>
<dbReference type="Proteomes" id="UP000002305">
    <property type="component" value="Chromosome"/>
</dbReference>
<dbReference type="GO" id="GO:0005737">
    <property type="term" value="C:cytoplasm"/>
    <property type="evidence" value="ECO:0007669"/>
    <property type="project" value="UniProtKB-SubCell"/>
</dbReference>
<dbReference type="GO" id="GO:0008650">
    <property type="term" value="F:rRNA (uridine-2'-O-)-methyltransferase activity"/>
    <property type="evidence" value="ECO:0007669"/>
    <property type="project" value="UniProtKB-UniRule"/>
</dbReference>
<dbReference type="FunFam" id="3.40.50.150:FF:000354">
    <property type="entry name" value="Ribosomal RNA large subunit methyltransferase E"/>
    <property type="match status" value="1"/>
</dbReference>
<dbReference type="Gene3D" id="3.40.50.150">
    <property type="entry name" value="Vaccinia Virus protein VP39"/>
    <property type="match status" value="1"/>
</dbReference>
<dbReference type="HAMAP" id="MF_01547">
    <property type="entry name" value="RNA_methyltr_E"/>
    <property type="match status" value="1"/>
</dbReference>
<dbReference type="InterPro" id="IPR050082">
    <property type="entry name" value="RNA_methyltr_RlmE"/>
</dbReference>
<dbReference type="InterPro" id="IPR002877">
    <property type="entry name" value="RNA_MeTrfase_FtsJ_dom"/>
</dbReference>
<dbReference type="InterPro" id="IPR015507">
    <property type="entry name" value="rRNA-MeTfrase_E"/>
</dbReference>
<dbReference type="InterPro" id="IPR029063">
    <property type="entry name" value="SAM-dependent_MTases_sf"/>
</dbReference>
<dbReference type="PANTHER" id="PTHR10920">
    <property type="entry name" value="RIBOSOMAL RNA METHYLTRANSFERASE"/>
    <property type="match status" value="1"/>
</dbReference>
<dbReference type="PANTHER" id="PTHR10920:SF18">
    <property type="entry name" value="RRNA METHYLTRANSFERASE 2, MITOCHONDRIAL"/>
    <property type="match status" value="1"/>
</dbReference>
<dbReference type="Pfam" id="PF01728">
    <property type="entry name" value="FtsJ"/>
    <property type="match status" value="1"/>
</dbReference>
<dbReference type="PIRSF" id="PIRSF005461">
    <property type="entry name" value="23S_rRNA_mtase"/>
    <property type="match status" value="1"/>
</dbReference>
<dbReference type="SUPFAM" id="SSF53335">
    <property type="entry name" value="S-adenosyl-L-methionine-dependent methyltransferases"/>
    <property type="match status" value="1"/>
</dbReference>
<proteinExistence type="inferred from homology"/>
<evidence type="ECO:0000255" key="1">
    <source>
        <dbReference type="HAMAP-Rule" id="MF_01547"/>
    </source>
</evidence>
<reference key="1">
    <citation type="journal article" date="2009" name="BMC Genomics">
        <title>Analysis of the Rickettsia africae genome reveals that virulence acquisition in Rickettsia species may be explained by genome reduction.</title>
        <authorList>
            <person name="Fournier P.-E."/>
            <person name="El Karkouri K."/>
            <person name="Leroy Q."/>
            <person name="Robert C."/>
            <person name="Giumelli B."/>
            <person name="Renesto P."/>
            <person name="Socolovschi C."/>
            <person name="Parola P."/>
            <person name="Audic S."/>
            <person name="Raoult D."/>
        </authorList>
    </citation>
    <scope>NUCLEOTIDE SEQUENCE [LARGE SCALE GENOMIC DNA]</scope>
    <source>
        <strain>ESF-5</strain>
    </source>
</reference>
<organism>
    <name type="scientific">Rickettsia africae (strain ESF-5)</name>
    <dbReference type="NCBI Taxonomy" id="347255"/>
    <lineage>
        <taxon>Bacteria</taxon>
        <taxon>Pseudomonadati</taxon>
        <taxon>Pseudomonadota</taxon>
        <taxon>Alphaproteobacteria</taxon>
        <taxon>Rickettsiales</taxon>
        <taxon>Rickettsiaceae</taxon>
        <taxon>Rickettsieae</taxon>
        <taxon>Rickettsia</taxon>
        <taxon>spotted fever group</taxon>
    </lineage>
</organism>
<feature type="chain" id="PRO_1000215457" description="Ribosomal RNA large subunit methyltransferase E">
    <location>
        <begin position="1"/>
        <end position="227"/>
    </location>
</feature>
<feature type="active site" description="Proton acceptor" evidence="1">
    <location>
        <position position="183"/>
    </location>
</feature>
<feature type="binding site" evidence="1">
    <location>
        <position position="78"/>
    </location>
    <ligand>
        <name>S-adenosyl-L-methionine</name>
        <dbReference type="ChEBI" id="CHEBI:59789"/>
    </ligand>
</feature>
<feature type="binding site" evidence="1">
    <location>
        <position position="80"/>
    </location>
    <ligand>
        <name>S-adenosyl-L-methionine</name>
        <dbReference type="ChEBI" id="CHEBI:59789"/>
    </ligand>
</feature>
<feature type="binding site" evidence="1">
    <location>
        <position position="103"/>
    </location>
    <ligand>
        <name>S-adenosyl-L-methionine</name>
        <dbReference type="ChEBI" id="CHEBI:59789"/>
    </ligand>
</feature>
<feature type="binding site" evidence="1">
    <location>
        <position position="119"/>
    </location>
    <ligand>
        <name>S-adenosyl-L-methionine</name>
        <dbReference type="ChEBI" id="CHEBI:59789"/>
    </ligand>
</feature>
<feature type="binding site" evidence="1">
    <location>
        <position position="143"/>
    </location>
    <ligand>
        <name>S-adenosyl-L-methionine</name>
        <dbReference type="ChEBI" id="CHEBI:59789"/>
    </ligand>
</feature>
<comment type="function">
    <text evidence="1">Specifically methylates the uridine in position 2552 of 23S rRNA at the 2'-O position of the ribose in the fully assembled 50S ribosomal subunit.</text>
</comment>
<comment type="catalytic activity">
    <reaction evidence="1">
        <text>uridine(2552) in 23S rRNA + S-adenosyl-L-methionine = 2'-O-methyluridine(2552) in 23S rRNA + S-adenosyl-L-homocysteine + H(+)</text>
        <dbReference type="Rhea" id="RHEA:42720"/>
        <dbReference type="Rhea" id="RHEA-COMP:10202"/>
        <dbReference type="Rhea" id="RHEA-COMP:10203"/>
        <dbReference type="ChEBI" id="CHEBI:15378"/>
        <dbReference type="ChEBI" id="CHEBI:57856"/>
        <dbReference type="ChEBI" id="CHEBI:59789"/>
        <dbReference type="ChEBI" id="CHEBI:65315"/>
        <dbReference type="ChEBI" id="CHEBI:74478"/>
        <dbReference type="EC" id="2.1.1.166"/>
    </reaction>
</comment>
<comment type="subcellular location">
    <subcellularLocation>
        <location evidence="1">Cytoplasm</location>
    </subcellularLocation>
</comment>
<comment type="similarity">
    <text evidence="1">Belongs to the class I-like SAM-binding methyltransferase superfamily. RNA methyltransferase RlmE family.</text>
</comment>
<accession>C3PMK3</accession>
<protein>
    <recommendedName>
        <fullName evidence="1">Ribosomal RNA large subunit methyltransferase E</fullName>
        <ecNumber evidence="1">2.1.1.166</ecNumber>
    </recommendedName>
    <alternativeName>
        <fullName evidence="1">23S rRNA Um2552 methyltransferase</fullName>
    </alternativeName>
    <alternativeName>
        <fullName evidence="1">rRNA (uridine-2'-O-)-methyltransferase</fullName>
    </alternativeName>
</protein>
<sequence>MTNNLSGYRNKFVRVKTSKKRTVSSSNWLRRQLNDPYVAKARMDGFRSRAAYKLLEIHEKFKLFTPNMKIVDLGAAPGGWSQVASKLIKASDNNLNNKIISIDVLEIEHVAGVEFVQKDFFEADTEELIIQALDGRADIVMSDMASNTIGHKATDHIRTLLLCEQAFEFALKVLKPSGHFIAKIFRGGAENELLYKVKREFKTVKHFKPSSSRSESTEIYLVALNKK</sequence>
<gene>
    <name evidence="1" type="primary">rlmE</name>
    <name evidence="1" type="synonym">ftsJ</name>
    <name evidence="1" type="synonym">rrmJ</name>
    <name type="ordered locus">RAF_ORF0196</name>
</gene>